<keyword id="KW-0029">Amino-acid transport</keyword>
<keyword id="KW-1015">Disulfide bond</keyword>
<keyword id="KW-0574">Periplasm</keyword>
<keyword id="KW-1185">Reference proteome</keyword>
<keyword id="KW-0732">Signal</keyword>
<keyword id="KW-0813">Transport</keyword>
<accession>P0AD98</accession>
<accession>P02917</accession>
<accession>P76698</accession>
<accession>Q8CVL7</accession>
<accession>Q8X6S2</accession>
<protein>
    <recommendedName>
        <fullName>Leu/Ile/Val-binding protein</fullName>
        <shortName>LIV-BP</shortName>
    </recommendedName>
</protein>
<organism>
    <name type="scientific">Escherichia coli O157:H7</name>
    <dbReference type="NCBI Taxonomy" id="83334"/>
    <lineage>
        <taxon>Bacteria</taxon>
        <taxon>Pseudomonadati</taxon>
        <taxon>Pseudomonadota</taxon>
        <taxon>Gammaproteobacteria</taxon>
        <taxon>Enterobacterales</taxon>
        <taxon>Enterobacteriaceae</taxon>
        <taxon>Escherichia</taxon>
    </lineage>
</organism>
<dbReference type="EMBL" id="AE005174">
    <property type="protein sequence ID" value="AAG58569.1"/>
    <property type="status" value="ALT_INIT"/>
    <property type="molecule type" value="Genomic_DNA"/>
</dbReference>
<dbReference type="EMBL" id="BA000007">
    <property type="protein sequence ID" value="BAB37732.2"/>
    <property type="molecule type" value="Genomic_DNA"/>
</dbReference>
<dbReference type="PIR" id="E86013">
    <property type="entry name" value="E86013"/>
</dbReference>
<dbReference type="PIR" id="E91167">
    <property type="entry name" value="E91167"/>
</dbReference>
<dbReference type="RefSeq" id="NP_312336.1">
    <property type="nucleotide sequence ID" value="NC_002695.1"/>
</dbReference>
<dbReference type="RefSeq" id="WP_001021996.1">
    <property type="nucleotide sequence ID" value="NZ_VOAI01000004.1"/>
</dbReference>
<dbReference type="SMR" id="P0AD98"/>
<dbReference type="STRING" id="155864.Z4834"/>
<dbReference type="GeneID" id="93778531"/>
<dbReference type="KEGG" id="ece:Z4834"/>
<dbReference type="KEGG" id="ecs:ECs_4309"/>
<dbReference type="PATRIC" id="fig|386585.9.peg.4502"/>
<dbReference type="eggNOG" id="COG0683">
    <property type="taxonomic scope" value="Bacteria"/>
</dbReference>
<dbReference type="HOGENOM" id="CLU_027128_6_0_6"/>
<dbReference type="OMA" id="MEFTGAR"/>
<dbReference type="Proteomes" id="UP000000558">
    <property type="component" value="Chromosome"/>
</dbReference>
<dbReference type="Proteomes" id="UP000002519">
    <property type="component" value="Chromosome"/>
</dbReference>
<dbReference type="GO" id="GO:0042597">
    <property type="term" value="C:periplasmic space"/>
    <property type="evidence" value="ECO:0007669"/>
    <property type="project" value="UniProtKB-SubCell"/>
</dbReference>
<dbReference type="GO" id="GO:0006865">
    <property type="term" value="P:amino acid transport"/>
    <property type="evidence" value="ECO:0007669"/>
    <property type="project" value="UniProtKB-KW"/>
</dbReference>
<dbReference type="CDD" id="cd06342">
    <property type="entry name" value="PBP1_ABC_LIVBP-like"/>
    <property type="match status" value="1"/>
</dbReference>
<dbReference type="FunFam" id="3.40.50.2300:FF:000033">
    <property type="entry name" value="Amino acid ABC transporter substrate-binding protein"/>
    <property type="match status" value="1"/>
</dbReference>
<dbReference type="Gene3D" id="3.40.50.2300">
    <property type="match status" value="2"/>
</dbReference>
<dbReference type="InterPro" id="IPR028081">
    <property type="entry name" value="Leu-bd"/>
</dbReference>
<dbReference type="InterPro" id="IPR000709">
    <property type="entry name" value="Leu_Ile_Val-bd"/>
</dbReference>
<dbReference type="InterPro" id="IPR028082">
    <property type="entry name" value="Peripla_BP_I"/>
</dbReference>
<dbReference type="NCBIfam" id="NF011933">
    <property type="entry name" value="PRK15404.1"/>
    <property type="match status" value="1"/>
</dbReference>
<dbReference type="PANTHER" id="PTHR47151">
    <property type="entry name" value="LEU/ILE/VAL-BINDING ABC TRANSPORTER SUBUNIT"/>
    <property type="match status" value="1"/>
</dbReference>
<dbReference type="PANTHER" id="PTHR47151:SF1">
    <property type="entry name" value="LEU_ILE_VAL-BINDING PROTEIN"/>
    <property type="match status" value="1"/>
</dbReference>
<dbReference type="Pfam" id="PF13458">
    <property type="entry name" value="Peripla_BP_6"/>
    <property type="match status" value="1"/>
</dbReference>
<dbReference type="PRINTS" id="PR00337">
    <property type="entry name" value="LEUILEVALBP"/>
</dbReference>
<dbReference type="SUPFAM" id="SSF53822">
    <property type="entry name" value="Periplasmic binding protein-like I"/>
    <property type="match status" value="1"/>
</dbReference>
<proteinExistence type="inferred from homology"/>
<gene>
    <name type="primary">livJ</name>
    <name type="ordered locus">Z4834</name>
    <name type="ordered locus">ECs4309</name>
</gene>
<comment type="function">
    <text evidence="1">This protein is a component of the leucine, isoleucine, valine, (threonine) transport system, which is one of the two periplasmic binding protein-dependent transport systems of the high-affinity transport of the branched-chain amino acids.</text>
</comment>
<comment type="subcellular location">
    <subcellularLocation>
        <location evidence="1">Periplasm</location>
    </subcellularLocation>
</comment>
<comment type="similarity">
    <text evidence="3">Belongs to the leucine-binding protein family.</text>
</comment>
<comment type="sequence caution" evidence="3">
    <conflict type="erroneous initiation">
        <sequence resource="EMBL-CDS" id="AAG58569"/>
    </conflict>
    <text>Extended N-terminus.</text>
</comment>
<name>LIVJ_ECO57</name>
<reference key="1">
    <citation type="journal article" date="2001" name="Nature">
        <title>Genome sequence of enterohaemorrhagic Escherichia coli O157:H7.</title>
        <authorList>
            <person name="Perna N.T."/>
            <person name="Plunkett G. III"/>
            <person name="Burland V."/>
            <person name="Mau B."/>
            <person name="Glasner J.D."/>
            <person name="Rose D.J."/>
            <person name="Mayhew G.F."/>
            <person name="Evans P.S."/>
            <person name="Gregor J."/>
            <person name="Kirkpatrick H.A."/>
            <person name="Posfai G."/>
            <person name="Hackett J."/>
            <person name="Klink S."/>
            <person name="Boutin A."/>
            <person name="Shao Y."/>
            <person name="Miller L."/>
            <person name="Grotbeck E.J."/>
            <person name="Davis N.W."/>
            <person name="Lim A."/>
            <person name="Dimalanta E.T."/>
            <person name="Potamousis K."/>
            <person name="Apodaca J."/>
            <person name="Anantharaman T.S."/>
            <person name="Lin J."/>
            <person name="Yen G."/>
            <person name="Schwartz D.C."/>
            <person name="Welch R.A."/>
            <person name="Blattner F.R."/>
        </authorList>
    </citation>
    <scope>NUCLEOTIDE SEQUENCE [LARGE SCALE GENOMIC DNA]</scope>
    <source>
        <strain>O157:H7 / EDL933 / ATCC 700927 / EHEC</strain>
    </source>
</reference>
<reference key="2">
    <citation type="journal article" date="2001" name="DNA Res.">
        <title>Complete genome sequence of enterohemorrhagic Escherichia coli O157:H7 and genomic comparison with a laboratory strain K-12.</title>
        <authorList>
            <person name="Hayashi T."/>
            <person name="Makino K."/>
            <person name="Ohnishi M."/>
            <person name="Kurokawa K."/>
            <person name="Ishii K."/>
            <person name="Yokoyama K."/>
            <person name="Han C.-G."/>
            <person name="Ohtsubo E."/>
            <person name="Nakayama K."/>
            <person name="Murata T."/>
            <person name="Tanaka M."/>
            <person name="Tobe T."/>
            <person name="Iida T."/>
            <person name="Takami H."/>
            <person name="Honda T."/>
            <person name="Sasakawa C."/>
            <person name="Ogasawara N."/>
            <person name="Yasunaga T."/>
            <person name="Kuhara S."/>
            <person name="Shiba T."/>
            <person name="Hattori M."/>
            <person name="Shinagawa H."/>
        </authorList>
    </citation>
    <scope>NUCLEOTIDE SEQUENCE [LARGE SCALE GENOMIC DNA]</scope>
    <source>
        <strain>O157:H7 / Sakai / RIMD 0509952 / EHEC</strain>
    </source>
</reference>
<feature type="signal peptide" evidence="2">
    <location>
        <begin position="1"/>
        <end position="23"/>
    </location>
</feature>
<feature type="chain" id="PRO_0000043181" description="Leu/Ile/Val-binding protein">
    <location>
        <begin position="24"/>
        <end position="367"/>
    </location>
</feature>
<feature type="disulfide bond" evidence="1">
    <location>
        <begin position="76"/>
        <end position="101"/>
    </location>
</feature>
<evidence type="ECO:0000250" key="1"/>
<evidence type="ECO:0000255" key="2"/>
<evidence type="ECO:0000305" key="3"/>
<sequence length="367" mass="39076">MNIKGKALLAGCIALAFSNMALAEDIKVAVVGAMSGPVAQYGDQEFTGAEQAVADINAKGGIKGNKLQIVKYDDACDPKQAVAVANKVVNDGIKYVIGHLCSSSTQPASDIYEDEGILMITPAATAPELTARGYQLILRTTGLDSDQGPTAAKYILEKVKPQRIAIVHDKQQYGEGLARAVQDGLKKGNANVVFFDGITAGEKDFSTLVARLKKENIDFVYYGGYHPEMGQILRQARAAGLKTQFMGPEGVANVSLSNIAGESAEGLLVTKPKNYDQVPANKPIVDAIKAKKQDPSGAFVWTTYAALQSLQAGLNQSDDPAEIAKYLKANSVDTVMGPLTWDEKGDLKGFEFGVFDWHANGTATDAK</sequence>